<sequence length="296" mass="33855">MMLPLQGAQMLQVLEKSLRRSLPASLKVYGTVFHINHGNPFNLKAVVDKWPDFNTVVVCPQEQDMTDDLDHYTNTYQIYSKDPQNCQEFLGSPELINWKQHLQIQSSQPSLNEAIQNLAVIKSFKVKQTQRILYMAAETAKELAPFLLKSKILSPSGGKPKAINQEMFKLSSMDVTHAQLVSKFWHFGGNERSQRFIERCIQTFPTCCLLGPEGTPVCWDLMDQTGEMRMAGTLPEYRLHGLVTYVIYSHAQKLGKLGFPVYSHVDYSNEAMQKMSYTLQHVPIPRSWNQWNCVPL</sequence>
<organism>
    <name type="scientific">Pongo abelii</name>
    <name type="common">Sumatran orangutan</name>
    <name type="synonym">Pongo pygmaeus abelii</name>
    <dbReference type="NCBI Taxonomy" id="9601"/>
    <lineage>
        <taxon>Eukaryota</taxon>
        <taxon>Metazoa</taxon>
        <taxon>Chordata</taxon>
        <taxon>Craniata</taxon>
        <taxon>Vertebrata</taxon>
        <taxon>Euteleostomi</taxon>
        <taxon>Mammalia</taxon>
        <taxon>Eutheria</taxon>
        <taxon>Euarchontoglires</taxon>
        <taxon>Primates</taxon>
        <taxon>Haplorrhini</taxon>
        <taxon>Catarrhini</taxon>
        <taxon>Hominidae</taxon>
        <taxon>Pongo</taxon>
    </lineage>
</organism>
<gene>
    <name type="primary">GLYAT</name>
</gene>
<feature type="chain" id="PRO_0000281871" description="Glycine N-acyltransferase">
    <location>
        <begin position="1"/>
        <end position="296"/>
    </location>
</feature>
<feature type="modified residue" description="N6-acetyllysine; alternate" evidence="2">
    <location>
        <position position="16"/>
    </location>
</feature>
<feature type="modified residue" description="N6-succinyllysine; alternate" evidence="2">
    <location>
        <position position="16"/>
    </location>
</feature>
<feature type="modified residue" description="N6-acetyllysine; alternate" evidence="2">
    <location>
        <position position="127"/>
    </location>
</feature>
<feature type="modified residue" description="N6-succinyllysine; alternate" evidence="2">
    <location>
        <position position="127"/>
    </location>
</feature>
<feature type="modified residue" description="N6-acetyllysine; alternate" evidence="2">
    <location>
        <position position="141"/>
    </location>
</feature>
<feature type="modified residue" description="N6-succinyllysine; alternate" evidence="2">
    <location>
        <position position="141"/>
    </location>
</feature>
<feature type="modified residue" description="N6-acetyllysine" evidence="2">
    <location>
        <position position="159"/>
    </location>
</feature>
<feature type="modified residue" description="N6-succinyllysine" evidence="2">
    <location>
        <position position="169"/>
    </location>
</feature>
<feature type="modified residue" description="N6-acetyllysine; alternate" evidence="2">
    <location>
        <position position="183"/>
    </location>
</feature>
<feature type="modified residue" description="N6-succinyllysine; alternate" evidence="2">
    <location>
        <position position="183"/>
    </location>
</feature>
<feature type="modified residue" description="N6-acetyllysine; alternate" evidence="2">
    <location>
        <position position="256"/>
    </location>
</feature>
<feature type="modified residue" description="N6-succinyllysine; alternate" evidence="2">
    <location>
        <position position="256"/>
    </location>
</feature>
<feature type="sequence conflict" description="In Ref. 1; CAH93052." evidence="3" ref="1">
    <original>K</original>
    <variation>T</variation>
    <location>
        <position position="44"/>
    </location>
</feature>
<feature type="sequence conflict" description="In Ref. 1; CAH93052." evidence="3" ref="1">
    <original>Q</original>
    <variation>L</variation>
    <location>
        <position position="103"/>
    </location>
</feature>
<feature type="sequence conflict" description="In Ref. 1; CAH93052." evidence="3" ref="1">
    <original>S</original>
    <variation>N</variation>
    <location>
        <position position="182"/>
    </location>
</feature>
<feature type="sequence conflict" description="In Ref. 1; CAH93052." evidence="3" ref="1">
    <original>F</original>
    <variation>L</variation>
    <location>
        <position position="196"/>
    </location>
</feature>
<keyword id="KW-0007">Acetylation</keyword>
<keyword id="KW-0012">Acyltransferase</keyword>
<keyword id="KW-0216">Detoxification</keyword>
<keyword id="KW-0496">Mitochondrion</keyword>
<keyword id="KW-1185">Reference proteome</keyword>
<keyword id="KW-0808">Transferase</keyword>
<dbReference type="EC" id="2.3.1.13" evidence="1"/>
<dbReference type="EC" id="2.3.1.71" evidence="1"/>
<dbReference type="EMBL" id="CR857113">
    <property type="protein sequence ID" value="CAH89417.1"/>
    <property type="molecule type" value="mRNA"/>
</dbReference>
<dbReference type="EMBL" id="CR860949">
    <property type="protein sequence ID" value="CAH93052.1"/>
    <property type="molecule type" value="mRNA"/>
</dbReference>
<dbReference type="RefSeq" id="NP_001126806.1">
    <property type="nucleotide sequence ID" value="NM_001133334.1"/>
</dbReference>
<dbReference type="SMR" id="Q5RFP0"/>
<dbReference type="FunCoup" id="Q5RFP0">
    <property type="interactions" value="29"/>
</dbReference>
<dbReference type="STRING" id="9601.ENSPPYP00000003731"/>
<dbReference type="GeneID" id="100173810"/>
<dbReference type="KEGG" id="pon:100173810"/>
<dbReference type="CTD" id="10249"/>
<dbReference type="eggNOG" id="ENOG502SDQB">
    <property type="taxonomic scope" value="Eukaryota"/>
</dbReference>
<dbReference type="InParanoid" id="Q5RFP0"/>
<dbReference type="OrthoDB" id="61870at2759"/>
<dbReference type="Proteomes" id="UP000001595">
    <property type="component" value="Unplaced"/>
</dbReference>
<dbReference type="GO" id="GO:0005739">
    <property type="term" value="C:mitochondrion"/>
    <property type="evidence" value="ECO:0000250"/>
    <property type="project" value="UniProtKB"/>
</dbReference>
<dbReference type="GO" id="GO:0047961">
    <property type="term" value="F:glycine N-acyltransferase activity"/>
    <property type="evidence" value="ECO:0007669"/>
    <property type="project" value="UniProtKB-EC"/>
</dbReference>
<dbReference type="GO" id="GO:0047962">
    <property type="term" value="F:glycine N-benzoyltransferase activity"/>
    <property type="evidence" value="ECO:0000250"/>
    <property type="project" value="UniProtKB"/>
</dbReference>
<dbReference type="GO" id="GO:0006544">
    <property type="term" value="P:glycine metabolic process"/>
    <property type="evidence" value="ECO:0000250"/>
    <property type="project" value="UniProtKB"/>
</dbReference>
<dbReference type="GO" id="GO:0032787">
    <property type="term" value="P:monocarboxylic acid metabolic process"/>
    <property type="evidence" value="ECO:0000250"/>
    <property type="project" value="UniProtKB"/>
</dbReference>
<dbReference type="GO" id="GO:0009636">
    <property type="term" value="P:response to toxic substance"/>
    <property type="evidence" value="ECO:0007669"/>
    <property type="project" value="UniProtKB-KW"/>
</dbReference>
<dbReference type="FunFam" id="3.40.630.30:FF:000075">
    <property type="entry name" value="Glycine N-acyltransferase"/>
    <property type="match status" value="1"/>
</dbReference>
<dbReference type="Gene3D" id="3.40.630.30">
    <property type="match status" value="1"/>
</dbReference>
<dbReference type="InterPro" id="IPR016181">
    <property type="entry name" value="Acyl_CoA_acyltransferase"/>
</dbReference>
<dbReference type="InterPro" id="IPR010313">
    <property type="entry name" value="Glycine_N-acyltransferase"/>
</dbReference>
<dbReference type="InterPro" id="IPR013652">
    <property type="entry name" value="Glycine_N-acyltransferase_C"/>
</dbReference>
<dbReference type="InterPro" id="IPR015938">
    <property type="entry name" value="Glycine_N-acyltransferase_N"/>
</dbReference>
<dbReference type="PANTHER" id="PTHR15298:SF9">
    <property type="entry name" value="GLYCINE N-ACYLTRANSFERASE"/>
    <property type="match status" value="1"/>
</dbReference>
<dbReference type="PANTHER" id="PTHR15298">
    <property type="entry name" value="L-COA N-ACYLTRANSFERASE-RELATED"/>
    <property type="match status" value="1"/>
</dbReference>
<dbReference type="Pfam" id="PF08444">
    <property type="entry name" value="Gly_acyl_tr_C"/>
    <property type="match status" value="1"/>
</dbReference>
<dbReference type="Pfam" id="PF06021">
    <property type="entry name" value="Gly_acyl_tr_N"/>
    <property type="match status" value="1"/>
</dbReference>
<dbReference type="SUPFAM" id="SSF55729">
    <property type="entry name" value="Acyl-CoA N-acyltransferases (Nat)"/>
    <property type="match status" value="1"/>
</dbReference>
<proteinExistence type="evidence at transcript level"/>
<evidence type="ECO:0000250" key="1">
    <source>
        <dbReference type="UniProtKB" id="Q6IB77"/>
    </source>
</evidence>
<evidence type="ECO:0000250" key="2">
    <source>
        <dbReference type="UniProtKB" id="Q91XE0"/>
    </source>
</evidence>
<evidence type="ECO:0000305" key="3"/>
<comment type="function">
    <text evidence="1">Mitochondrial acyltransferase which transfers an acyl group to the N-terminus of glycine and glutamine, although much less efficiently. Can conjugate a multitude of substrates to form a variety of N-acylglycines, thereby detoxify xenobiotics, such as benzoic acid or salicylic acid, and endogenous organic acids, such as isovaleric acid.</text>
</comment>
<comment type="catalytic activity">
    <reaction evidence="1">
        <text>an acyl-CoA + glycine = an N-acylglycine + CoA + H(+)</text>
        <dbReference type="Rhea" id="RHEA:19869"/>
        <dbReference type="ChEBI" id="CHEBI:15378"/>
        <dbReference type="ChEBI" id="CHEBI:57287"/>
        <dbReference type="ChEBI" id="CHEBI:57305"/>
        <dbReference type="ChEBI" id="CHEBI:57670"/>
        <dbReference type="ChEBI" id="CHEBI:58342"/>
        <dbReference type="EC" id="2.3.1.13"/>
    </reaction>
</comment>
<comment type="catalytic activity">
    <reaction evidence="1">
        <text>benzoyl-CoA + glycine = N-benzoylglycine + CoA + H(+)</text>
        <dbReference type="Rhea" id="RHEA:18493"/>
        <dbReference type="ChEBI" id="CHEBI:15378"/>
        <dbReference type="ChEBI" id="CHEBI:57287"/>
        <dbReference type="ChEBI" id="CHEBI:57305"/>
        <dbReference type="ChEBI" id="CHEBI:57369"/>
        <dbReference type="ChEBI" id="CHEBI:606565"/>
        <dbReference type="EC" id="2.3.1.71"/>
    </reaction>
</comment>
<comment type="subcellular location">
    <subcellularLocation>
        <location evidence="1">Mitochondrion</location>
    </subcellularLocation>
</comment>
<comment type="similarity">
    <text evidence="3">Belongs to the glycine N-acyltransferase family.</text>
</comment>
<name>GLYAT_PONAB</name>
<reference key="1">
    <citation type="submission" date="2004-11" db="EMBL/GenBank/DDBJ databases">
        <authorList>
            <consortium name="The German cDNA consortium"/>
        </authorList>
    </citation>
    <scope>NUCLEOTIDE SEQUENCE [LARGE SCALE MRNA]</scope>
    <source>
        <tissue>Kidney</tissue>
    </source>
</reference>
<protein>
    <recommendedName>
        <fullName>Glycine N-acyltransferase</fullName>
        <ecNumber evidence="1">2.3.1.13</ecNumber>
    </recommendedName>
    <alternativeName>
        <fullName>Acyl-CoA:glycine N-acyltransferase</fullName>
        <shortName>AAc</shortName>
    </alternativeName>
    <alternativeName>
        <fullName>Aralkyl acyl-CoA N-acyltransferase</fullName>
    </alternativeName>
    <alternativeName>
        <fullName>Aralkyl acyl-CoA:amino acid N-acyltransferase</fullName>
    </alternativeName>
    <alternativeName>
        <fullName>Benzoyl-coenzyme A:glycine N-acyltransferase</fullName>
    </alternativeName>
    <alternativeName>
        <fullName>Glycine N-benzoyltransferase</fullName>
        <ecNumber evidence="1">2.3.1.71</ecNumber>
    </alternativeName>
</protein>
<accession>Q5RFP0</accession>
<accession>Q5R5B4</accession>